<sequence>MPRIAALPDHLVNQIAAGEVVERPANALKEIVENSIDAGATAVDVELEGGGIRLIRVGDNGGGIHPDDIELALHRHATSKIKTLNDLEHVASMGFRGEGLASIASVSRLTLTSRQEDSSHATQVKAEDGKLSSPTAAAHPVGTTIEAAELFFNTPARRKFLKSENTEYAHCATMLERLALAHPHIAFSLKRDGKQVFKLPAQSLHERIAAIVGDDFQTASLEIDSGNSALRLYGAIAKPTFAKGKTDKQYCFVNHRFVRDKVMLHAVKQAYRDVLHNALTPAFVLFLELPPEAVDVNVHPTKTEIRFRDSRQVHQLVFHTLNKALADTRANLTESVSNAGEVLHDITGVTPAPMPSENDGENLFDSASNHPTGNKPDTRNAFGSSGKTAPMPYQAARAPQQHSLSLRESRAAMDTYAELYKKTDDIDLELSQFEQARFGNMPSETPAHKTDTPLSDGIPSQSELPPLGFAIAQLLGIYILAQAEDSLLLIDMHAAAERVNYEKMKRQRQENGNLQSQHLLIPVTFAASHEECAALADHAETLAGFGLELSDMGGNTLAVRAAPVMLGKSDVVSLARDVLGELAQVGSSQTIASHENRILATMSCHGSIRAGRRLTLPEMNALLRDMENTPRSNQCNHGRPTWVKLTLKELDTLFLRGQ</sequence>
<accession>Q5F8M6</accession>
<organism>
    <name type="scientific">Neisseria gonorrhoeae (strain ATCC 700825 / FA 1090)</name>
    <dbReference type="NCBI Taxonomy" id="242231"/>
    <lineage>
        <taxon>Bacteria</taxon>
        <taxon>Pseudomonadati</taxon>
        <taxon>Pseudomonadota</taxon>
        <taxon>Betaproteobacteria</taxon>
        <taxon>Neisseriales</taxon>
        <taxon>Neisseriaceae</taxon>
        <taxon>Neisseria</taxon>
    </lineage>
</organism>
<keyword id="KW-0002">3D-structure</keyword>
<keyword id="KW-0227">DNA damage</keyword>
<keyword id="KW-0234">DNA repair</keyword>
<keyword id="KW-1185">Reference proteome</keyword>
<evidence type="ECO:0000255" key="1">
    <source>
        <dbReference type="HAMAP-Rule" id="MF_00149"/>
    </source>
</evidence>
<evidence type="ECO:0000256" key="2">
    <source>
        <dbReference type="SAM" id="MobiDB-lite"/>
    </source>
</evidence>
<evidence type="ECO:0007829" key="3">
    <source>
        <dbReference type="PDB" id="3NCV"/>
    </source>
</evidence>
<feature type="chain" id="PRO_1000010046" description="DNA mismatch repair protein MutL">
    <location>
        <begin position="1"/>
        <end position="658"/>
    </location>
</feature>
<feature type="region of interest" description="Disordered" evidence="2">
    <location>
        <begin position="114"/>
        <end position="138"/>
    </location>
</feature>
<feature type="region of interest" description="Disordered" evidence="2">
    <location>
        <begin position="355"/>
        <end position="405"/>
    </location>
</feature>
<feature type="compositionally biased region" description="Basic and acidic residues" evidence="2">
    <location>
        <begin position="114"/>
        <end position="130"/>
    </location>
</feature>
<feature type="strand" evidence="3">
    <location>
        <begin position="469"/>
        <end position="474"/>
    </location>
</feature>
<feature type="turn" evidence="3">
    <location>
        <begin position="475"/>
        <end position="477"/>
    </location>
</feature>
<feature type="strand" evidence="3">
    <location>
        <begin position="478"/>
        <end position="483"/>
    </location>
</feature>
<feature type="strand" evidence="3">
    <location>
        <begin position="486"/>
        <end position="491"/>
    </location>
</feature>
<feature type="helix" evidence="3">
    <location>
        <begin position="492"/>
        <end position="511"/>
    </location>
</feature>
<feature type="strand" evidence="3">
    <location>
        <begin position="516"/>
        <end position="526"/>
    </location>
</feature>
<feature type="helix" evidence="3">
    <location>
        <begin position="529"/>
        <end position="544"/>
    </location>
</feature>
<feature type="strand" evidence="3">
    <location>
        <begin position="548"/>
        <end position="550"/>
    </location>
</feature>
<feature type="strand" evidence="3">
    <location>
        <begin position="556"/>
        <end position="563"/>
    </location>
</feature>
<feature type="helix" evidence="3">
    <location>
        <begin position="571"/>
        <end position="582"/>
    </location>
</feature>
<feature type="helix" evidence="3">
    <location>
        <begin position="595"/>
        <end position="602"/>
    </location>
</feature>
<feature type="strand" evidence="3">
    <location>
        <begin position="606"/>
        <end position="608"/>
    </location>
</feature>
<feature type="helix" evidence="3">
    <location>
        <begin position="616"/>
        <end position="627"/>
    </location>
</feature>
<feature type="turn" evidence="3">
    <location>
        <begin position="630"/>
        <end position="633"/>
    </location>
</feature>
<feature type="strand" evidence="3">
    <location>
        <begin position="640"/>
        <end position="646"/>
    </location>
</feature>
<feature type="helix" evidence="3">
    <location>
        <begin position="647"/>
        <end position="652"/>
    </location>
</feature>
<dbReference type="EMBL" id="AE004969">
    <property type="protein sequence ID" value="AAW89461.1"/>
    <property type="molecule type" value="Genomic_DNA"/>
</dbReference>
<dbReference type="RefSeq" id="WP_003698476.1">
    <property type="nucleotide sequence ID" value="NC_002946.2"/>
</dbReference>
<dbReference type="RefSeq" id="YP_207873.1">
    <property type="nucleotide sequence ID" value="NC_002946.2"/>
</dbReference>
<dbReference type="PDB" id="3NCV">
    <property type="method" value="X-ray"/>
    <property type="resolution" value="2.40 A"/>
    <property type="chains" value="A/B=460-658"/>
</dbReference>
<dbReference type="PDBsum" id="3NCV"/>
<dbReference type="SMR" id="Q5F8M6"/>
<dbReference type="STRING" id="242231.NGO_0744"/>
<dbReference type="KEGG" id="ngo:NGO_0744"/>
<dbReference type="PATRIC" id="fig|242231.10.peg.886"/>
<dbReference type="HOGENOM" id="CLU_004131_4_2_4"/>
<dbReference type="EvolutionaryTrace" id="Q5F8M6"/>
<dbReference type="Proteomes" id="UP000000535">
    <property type="component" value="Chromosome"/>
</dbReference>
<dbReference type="GO" id="GO:0032300">
    <property type="term" value="C:mismatch repair complex"/>
    <property type="evidence" value="ECO:0007669"/>
    <property type="project" value="InterPro"/>
</dbReference>
<dbReference type="GO" id="GO:0005524">
    <property type="term" value="F:ATP binding"/>
    <property type="evidence" value="ECO:0007669"/>
    <property type="project" value="InterPro"/>
</dbReference>
<dbReference type="GO" id="GO:0016887">
    <property type="term" value="F:ATP hydrolysis activity"/>
    <property type="evidence" value="ECO:0007669"/>
    <property type="project" value="InterPro"/>
</dbReference>
<dbReference type="GO" id="GO:0140664">
    <property type="term" value="F:ATP-dependent DNA damage sensor activity"/>
    <property type="evidence" value="ECO:0007669"/>
    <property type="project" value="InterPro"/>
</dbReference>
<dbReference type="GO" id="GO:0030983">
    <property type="term" value="F:mismatched DNA binding"/>
    <property type="evidence" value="ECO:0007669"/>
    <property type="project" value="InterPro"/>
</dbReference>
<dbReference type="GO" id="GO:0006298">
    <property type="term" value="P:mismatch repair"/>
    <property type="evidence" value="ECO:0007669"/>
    <property type="project" value="UniProtKB-UniRule"/>
</dbReference>
<dbReference type="CDD" id="cd16926">
    <property type="entry name" value="HATPase_MutL-MLH-PMS-like"/>
    <property type="match status" value="1"/>
</dbReference>
<dbReference type="CDD" id="cd03482">
    <property type="entry name" value="MutL_Trans_MutL"/>
    <property type="match status" value="1"/>
</dbReference>
<dbReference type="FunFam" id="3.30.230.10:FF:000013">
    <property type="entry name" value="DNA mismatch repair endonuclease MutL"/>
    <property type="match status" value="1"/>
</dbReference>
<dbReference type="FunFam" id="3.30.565.10:FF:000003">
    <property type="entry name" value="DNA mismatch repair endonuclease MutL"/>
    <property type="match status" value="1"/>
</dbReference>
<dbReference type="Gene3D" id="3.30.230.10">
    <property type="match status" value="1"/>
</dbReference>
<dbReference type="Gene3D" id="3.30.565.10">
    <property type="entry name" value="Histidine kinase-like ATPase, C-terminal domain"/>
    <property type="match status" value="1"/>
</dbReference>
<dbReference type="Gene3D" id="3.30.1540.20">
    <property type="entry name" value="MutL, C-terminal domain, dimerisation subdomain"/>
    <property type="match status" value="1"/>
</dbReference>
<dbReference type="Gene3D" id="3.30.1370.100">
    <property type="entry name" value="MutL, C-terminal domain, regulatory subdomain"/>
    <property type="match status" value="1"/>
</dbReference>
<dbReference type="HAMAP" id="MF_00149">
    <property type="entry name" value="DNA_mis_repair"/>
    <property type="match status" value="1"/>
</dbReference>
<dbReference type="InterPro" id="IPR014762">
    <property type="entry name" value="DNA_mismatch_repair_CS"/>
</dbReference>
<dbReference type="InterPro" id="IPR020667">
    <property type="entry name" value="DNA_mismatch_repair_MutL"/>
</dbReference>
<dbReference type="InterPro" id="IPR013507">
    <property type="entry name" value="DNA_mismatch_S5_2-like"/>
</dbReference>
<dbReference type="InterPro" id="IPR036890">
    <property type="entry name" value="HATPase_C_sf"/>
</dbReference>
<dbReference type="InterPro" id="IPR002099">
    <property type="entry name" value="MutL/Mlh/PMS"/>
</dbReference>
<dbReference type="InterPro" id="IPR038973">
    <property type="entry name" value="MutL/Mlh/Pms-like"/>
</dbReference>
<dbReference type="InterPro" id="IPR014790">
    <property type="entry name" value="MutL_C"/>
</dbReference>
<dbReference type="InterPro" id="IPR042120">
    <property type="entry name" value="MutL_C_dimsub"/>
</dbReference>
<dbReference type="InterPro" id="IPR042121">
    <property type="entry name" value="MutL_C_regsub"/>
</dbReference>
<dbReference type="InterPro" id="IPR037198">
    <property type="entry name" value="MutL_C_sf"/>
</dbReference>
<dbReference type="InterPro" id="IPR020568">
    <property type="entry name" value="Ribosomal_Su5_D2-typ_SF"/>
</dbReference>
<dbReference type="InterPro" id="IPR014721">
    <property type="entry name" value="Ribsml_uS5_D2-typ_fold_subgr"/>
</dbReference>
<dbReference type="NCBIfam" id="TIGR00585">
    <property type="entry name" value="mutl"/>
    <property type="match status" value="1"/>
</dbReference>
<dbReference type="NCBIfam" id="NF000949">
    <property type="entry name" value="PRK00095.1-2"/>
    <property type="match status" value="1"/>
</dbReference>
<dbReference type="PANTHER" id="PTHR10073">
    <property type="entry name" value="DNA MISMATCH REPAIR PROTEIN MLH, PMS, MUTL"/>
    <property type="match status" value="1"/>
</dbReference>
<dbReference type="PANTHER" id="PTHR10073:SF12">
    <property type="entry name" value="DNA MISMATCH REPAIR PROTEIN MLH1"/>
    <property type="match status" value="1"/>
</dbReference>
<dbReference type="Pfam" id="PF01119">
    <property type="entry name" value="DNA_mis_repair"/>
    <property type="match status" value="1"/>
</dbReference>
<dbReference type="Pfam" id="PF13589">
    <property type="entry name" value="HATPase_c_3"/>
    <property type="match status" value="1"/>
</dbReference>
<dbReference type="Pfam" id="PF08676">
    <property type="entry name" value="MutL_C"/>
    <property type="match status" value="1"/>
</dbReference>
<dbReference type="SMART" id="SM01340">
    <property type="entry name" value="DNA_mis_repair"/>
    <property type="match status" value="1"/>
</dbReference>
<dbReference type="SMART" id="SM00853">
    <property type="entry name" value="MutL_C"/>
    <property type="match status" value="1"/>
</dbReference>
<dbReference type="SUPFAM" id="SSF55874">
    <property type="entry name" value="ATPase domain of HSP90 chaperone/DNA topoisomerase II/histidine kinase"/>
    <property type="match status" value="1"/>
</dbReference>
<dbReference type="SUPFAM" id="SSF118116">
    <property type="entry name" value="DNA mismatch repair protein MutL"/>
    <property type="match status" value="1"/>
</dbReference>
<dbReference type="SUPFAM" id="SSF54211">
    <property type="entry name" value="Ribosomal protein S5 domain 2-like"/>
    <property type="match status" value="1"/>
</dbReference>
<dbReference type="PROSITE" id="PS00058">
    <property type="entry name" value="DNA_MISMATCH_REPAIR_1"/>
    <property type="match status" value="1"/>
</dbReference>
<name>MUTL_NEIG1</name>
<protein>
    <recommendedName>
        <fullName evidence="1">DNA mismatch repair protein MutL</fullName>
    </recommendedName>
</protein>
<proteinExistence type="evidence at protein level"/>
<comment type="function">
    <text evidence="1">This protein is involved in the repair of mismatches in DNA. It is required for dam-dependent methyl-directed DNA mismatch repair. May act as a 'molecular matchmaker', a protein that promotes the formation of a stable complex between two or more DNA-binding proteins in an ATP-dependent manner without itself being part of a final effector complex.</text>
</comment>
<comment type="similarity">
    <text evidence="1">Belongs to the DNA mismatch repair MutL/HexB family.</text>
</comment>
<reference key="1">
    <citation type="submission" date="2003-03" db="EMBL/GenBank/DDBJ databases">
        <title>The complete genome sequence of Neisseria gonorrhoeae.</title>
        <authorList>
            <person name="Lewis L.A."/>
            <person name="Gillaspy A.F."/>
            <person name="McLaughlin R.E."/>
            <person name="Gipson M."/>
            <person name="Ducey T.F."/>
            <person name="Ownbey T."/>
            <person name="Hartman K."/>
            <person name="Nydick C."/>
            <person name="Carson M.B."/>
            <person name="Vaughn J."/>
            <person name="Thomson C."/>
            <person name="Song L."/>
            <person name="Lin S."/>
            <person name="Yuan X."/>
            <person name="Najar F."/>
            <person name="Zhan M."/>
            <person name="Ren Q."/>
            <person name="Zhu H."/>
            <person name="Qi S."/>
            <person name="Kenton S.M."/>
            <person name="Lai H."/>
            <person name="White J.D."/>
            <person name="Clifton S."/>
            <person name="Roe B.A."/>
            <person name="Dyer D.W."/>
        </authorList>
    </citation>
    <scope>NUCLEOTIDE SEQUENCE [LARGE SCALE GENOMIC DNA]</scope>
    <source>
        <strain>ATCC 700825 / FA 1090</strain>
    </source>
</reference>
<gene>
    <name evidence="1" type="primary">mutL</name>
    <name type="ordered locus">NGO_0744</name>
</gene>